<feature type="chain" id="PRO_1000089056" description="Argininosuccinate synthase">
    <location>
        <begin position="1"/>
        <end position="399"/>
    </location>
</feature>
<feature type="binding site" evidence="1">
    <location>
        <begin position="10"/>
        <end position="18"/>
    </location>
    <ligand>
        <name>ATP</name>
        <dbReference type="ChEBI" id="CHEBI:30616"/>
    </ligand>
</feature>
<feature type="binding site" evidence="1">
    <location>
        <position position="38"/>
    </location>
    <ligand>
        <name>ATP</name>
        <dbReference type="ChEBI" id="CHEBI:30616"/>
    </ligand>
</feature>
<feature type="binding site" evidence="1">
    <location>
        <position position="89"/>
    </location>
    <ligand>
        <name>L-citrulline</name>
        <dbReference type="ChEBI" id="CHEBI:57743"/>
    </ligand>
</feature>
<feature type="binding site" evidence="1">
    <location>
        <position position="119"/>
    </location>
    <ligand>
        <name>ATP</name>
        <dbReference type="ChEBI" id="CHEBI:30616"/>
    </ligand>
</feature>
<feature type="binding site" evidence="1">
    <location>
        <position position="121"/>
    </location>
    <ligand>
        <name>L-aspartate</name>
        <dbReference type="ChEBI" id="CHEBI:29991"/>
    </ligand>
</feature>
<feature type="binding site" evidence="1">
    <location>
        <position position="125"/>
    </location>
    <ligand>
        <name>L-aspartate</name>
        <dbReference type="ChEBI" id="CHEBI:29991"/>
    </ligand>
</feature>
<feature type="binding site" evidence="1">
    <location>
        <position position="125"/>
    </location>
    <ligand>
        <name>L-citrulline</name>
        <dbReference type="ChEBI" id="CHEBI:57743"/>
    </ligand>
</feature>
<feature type="binding site" evidence="1">
    <location>
        <position position="126"/>
    </location>
    <ligand>
        <name>L-aspartate</name>
        <dbReference type="ChEBI" id="CHEBI:29991"/>
    </ligand>
</feature>
<feature type="binding site" evidence="1">
    <location>
        <position position="129"/>
    </location>
    <ligand>
        <name>L-citrulline</name>
        <dbReference type="ChEBI" id="CHEBI:57743"/>
    </ligand>
</feature>
<feature type="binding site" evidence="1">
    <location>
        <position position="177"/>
    </location>
    <ligand>
        <name>L-citrulline</name>
        <dbReference type="ChEBI" id="CHEBI:57743"/>
    </ligand>
</feature>
<feature type="binding site" evidence="1">
    <location>
        <position position="186"/>
    </location>
    <ligand>
        <name>L-citrulline</name>
        <dbReference type="ChEBI" id="CHEBI:57743"/>
    </ligand>
</feature>
<feature type="binding site" evidence="1">
    <location>
        <position position="262"/>
    </location>
    <ligand>
        <name>L-citrulline</name>
        <dbReference type="ChEBI" id="CHEBI:57743"/>
    </ligand>
</feature>
<feature type="binding site" evidence="1">
    <location>
        <position position="274"/>
    </location>
    <ligand>
        <name>L-citrulline</name>
        <dbReference type="ChEBI" id="CHEBI:57743"/>
    </ligand>
</feature>
<reference key="1">
    <citation type="submission" date="2008-02" db="EMBL/GenBank/DDBJ databases">
        <title>Complete sequence of Synechococcus sp. PCC 7002.</title>
        <authorList>
            <person name="Li T."/>
            <person name="Zhao J."/>
            <person name="Zhao C."/>
            <person name="Liu Z."/>
            <person name="Zhao F."/>
            <person name="Marquardt J."/>
            <person name="Nomura C.T."/>
            <person name="Persson S."/>
            <person name="Detter J.C."/>
            <person name="Richardson P.M."/>
            <person name="Lanz C."/>
            <person name="Schuster S.C."/>
            <person name="Wang J."/>
            <person name="Li S."/>
            <person name="Huang X."/>
            <person name="Cai T."/>
            <person name="Yu Z."/>
            <person name="Luo J."/>
            <person name="Zhao J."/>
            <person name="Bryant D.A."/>
        </authorList>
    </citation>
    <scope>NUCLEOTIDE SEQUENCE [LARGE SCALE GENOMIC DNA]</scope>
    <source>
        <strain>ATCC 27264 / PCC 7002 / PR-6</strain>
    </source>
</reference>
<proteinExistence type="inferred from homology"/>
<organism>
    <name type="scientific">Picosynechococcus sp. (strain ATCC 27264 / PCC 7002 / PR-6)</name>
    <name type="common">Agmenellum quadruplicatum</name>
    <dbReference type="NCBI Taxonomy" id="32049"/>
    <lineage>
        <taxon>Bacteria</taxon>
        <taxon>Bacillati</taxon>
        <taxon>Cyanobacteriota</taxon>
        <taxon>Cyanophyceae</taxon>
        <taxon>Oscillatoriophycideae</taxon>
        <taxon>Chroococcales</taxon>
        <taxon>Geminocystaceae</taxon>
        <taxon>Picosynechococcus</taxon>
    </lineage>
</organism>
<name>ASSY_PICP2</name>
<gene>
    <name evidence="1" type="primary">argG</name>
    <name type="ordered locus">SYNPCC7002_A2806</name>
</gene>
<evidence type="ECO:0000255" key="1">
    <source>
        <dbReference type="HAMAP-Rule" id="MF_00005"/>
    </source>
</evidence>
<accession>B1XN65</accession>
<keyword id="KW-0028">Amino-acid biosynthesis</keyword>
<keyword id="KW-0055">Arginine biosynthesis</keyword>
<keyword id="KW-0067">ATP-binding</keyword>
<keyword id="KW-0963">Cytoplasm</keyword>
<keyword id="KW-0436">Ligase</keyword>
<keyword id="KW-0547">Nucleotide-binding</keyword>
<keyword id="KW-1185">Reference proteome</keyword>
<comment type="catalytic activity">
    <reaction evidence="1">
        <text>L-citrulline + L-aspartate + ATP = 2-(N(omega)-L-arginino)succinate + AMP + diphosphate + H(+)</text>
        <dbReference type="Rhea" id="RHEA:10932"/>
        <dbReference type="ChEBI" id="CHEBI:15378"/>
        <dbReference type="ChEBI" id="CHEBI:29991"/>
        <dbReference type="ChEBI" id="CHEBI:30616"/>
        <dbReference type="ChEBI" id="CHEBI:33019"/>
        <dbReference type="ChEBI" id="CHEBI:57472"/>
        <dbReference type="ChEBI" id="CHEBI:57743"/>
        <dbReference type="ChEBI" id="CHEBI:456215"/>
        <dbReference type="EC" id="6.3.4.5"/>
    </reaction>
</comment>
<comment type="pathway">
    <text evidence="1">Amino-acid biosynthesis; L-arginine biosynthesis; L-arginine from L-ornithine and carbamoyl phosphate: step 2/3.</text>
</comment>
<comment type="subunit">
    <text evidence="1">Homotetramer.</text>
</comment>
<comment type="subcellular location">
    <subcellularLocation>
        <location evidence="1">Cytoplasm</location>
    </subcellularLocation>
</comment>
<comment type="similarity">
    <text evidence="1">Belongs to the argininosuccinate synthase family. Type 1 subfamily.</text>
</comment>
<protein>
    <recommendedName>
        <fullName evidence="1">Argininosuccinate synthase</fullName>
        <ecNumber evidence="1">6.3.4.5</ecNumber>
    </recommendedName>
    <alternativeName>
        <fullName evidence="1">Citrulline--aspartate ligase</fullName>
    </alternativeName>
</protein>
<sequence>MGRAEKVVLAYSGGVDTSVCIPYLMHEWGVKEVITLAADLGQGEELGPIKQKALNSGAVVSLVEDGREEFITDYAFPAIKANALYENRYPLATALARPLIAKMLVRAAEKYGADAVAHGCTAKGNDQVRFDLGILAQNPEIKVLAPAREWGMSREEAITYGEQYGLTFPVKKSSPFSIDKNLLGRSIEAGPLEDPMCEPPEEVFEMVKAISDTPDEPEYLEIGFEKGVPVMVNGEALGPVALISKLNEIVGNHGIGRIDMIENRVVGIKSREIYESPAMCVLVDAHRDLESLTLTADVTQYKRGMEQTYSELIYRGLWFSPLKQAVDAFIEQTQERVTGVVRLKLHKGTARIVGRRSEKSIYTPDLATYGADDKFNHESAEGFIYIWGLPTRVWAQANK</sequence>
<dbReference type="EC" id="6.3.4.5" evidence="1"/>
<dbReference type="EMBL" id="CP000951">
    <property type="protein sequence ID" value="ACB00775.1"/>
    <property type="molecule type" value="Genomic_DNA"/>
</dbReference>
<dbReference type="RefSeq" id="WP_012308393.1">
    <property type="nucleotide sequence ID" value="NZ_JAHHPU010000014.1"/>
</dbReference>
<dbReference type="SMR" id="B1XN65"/>
<dbReference type="STRING" id="32049.SYNPCC7002_A2806"/>
<dbReference type="KEGG" id="syp:SYNPCC7002_A2806"/>
<dbReference type="eggNOG" id="COG0137">
    <property type="taxonomic scope" value="Bacteria"/>
</dbReference>
<dbReference type="HOGENOM" id="CLU_032784_4_2_3"/>
<dbReference type="UniPathway" id="UPA00068">
    <property type="reaction ID" value="UER00113"/>
</dbReference>
<dbReference type="Proteomes" id="UP000001688">
    <property type="component" value="Chromosome"/>
</dbReference>
<dbReference type="GO" id="GO:0005737">
    <property type="term" value="C:cytoplasm"/>
    <property type="evidence" value="ECO:0007669"/>
    <property type="project" value="UniProtKB-SubCell"/>
</dbReference>
<dbReference type="GO" id="GO:0004055">
    <property type="term" value="F:argininosuccinate synthase activity"/>
    <property type="evidence" value="ECO:0007669"/>
    <property type="project" value="UniProtKB-UniRule"/>
</dbReference>
<dbReference type="GO" id="GO:0005524">
    <property type="term" value="F:ATP binding"/>
    <property type="evidence" value="ECO:0007669"/>
    <property type="project" value="UniProtKB-UniRule"/>
</dbReference>
<dbReference type="GO" id="GO:0000053">
    <property type="term" value="P:argininosuccinate metabolic process"/>
    <property type="evidence" value="ECO:0007669"/>
    <property type="project" value="TreeGrafter"/>
</dbReference>
<dbReference type="GO" id="GO:0006526">
    <property type="term" value="P:L-arginine biosynthetic process"/>
    <property type="evidence" value="ECO:0007669"/>
    <property type="project" value="UniProtKB-UniRule"/>
</dbReference>
<dbReference type="GO" id="GO:0000050">
    <property type="term" value="P:urea cycle"/>
    <property type="evidence" value="ECO:0007669"/>
    <property type="project" value="TreeGrafter"/>
</dbReference>
<dbReference type="CDD" id="cd01999">
    <property type="entry name" value="ASS"/>
    <property type="match status" value="1"/>
</dbReference>
<dbReference type="FunFam" id="3.40.50.620:FF:000019">
    <property type="entry name" value="Argininosuccinate synthase"/>
    <property type="match status" value="1"/>
</dbReference>
<dbReference type="FunFam" id="3.90.1260.10:FF:000007">
    <property type="entry name" value="Argininosuccinate synthase"/>
    <property type="match status" value="1"/>
</dbReference>
<dbReference type="Gene3D" id="3.90.1260.10">
    <property type="entry name" value="Argininosuccinate synthetase, chain A, domain 2"/>
    <property type="match status" value="1"/>
</dbReference>
<dbReference type="Gene3D" id="3.40.50.620">
    <property type="entry name" value="HUPs"/>
    <property type="match status" value="1"/>
</dbReference>
<dbReference type="Gene3D" id="1.20.5.470">
    <property type="entry name" value="Single helix bin"/>
    <property type="match status" value="1"/>
</dbReference>
<dbReference type="HAMAP" id="MF_00005">
    <property type="entry name" value="Arg_succ_synth_type1"/>
    <property type="match status" value="1"/>
</dbReference>
<dbReference type="InterPro" id="IPR048268">
    <property type="entry name" value="Arginosuc_syn_C"/>
</dbReference>
<dbReference type="InterPro" id="IPR048267">
    <property type="entry name" value="Arginosuc_syn_N"/>
</dbReference>
<dbReference type="InterPro" id="IPR001518">
    <property type="entry name" value="Arginosuc_synth"/>
</dbReference>
<dbReference type="InterPro" id="IPR018223">
    <property type="entry name" value="Arginosuc_synth_CS"/>
</dbReference>
<dbReference type="InterPro" id="IPR023434">
    <property type="entry name" value="Arginosuc_synth_type_1_subfam"/>
</dbReference>
<dbReference type="InterPro" id="IPR024074">
    <property type="entry name" value="AS_cat/multimer_dom_body"/>
</dbReference>
<dbReference type="InterPro" id="IPR014729">
    <property type="entry name" value="Rossmann-like_a/b/a_fold"/>
</dbReference>
<dbReference type="NCBIfam" id="TIGR00032">
    <property type="entry name" value="argG"/>
    <property type="match status" value="1"/>
</dbReference>
<dbReference type="NCBIfam" id="NF001770">
    <property type="entry name" value="PRK00509.1"/>
    <property type="match status" value="1"/>
</dbReference>
<dbReference type="PANTHER" id="PTHR11587">
    <property type="entry name" value="ARGININOSUCCINATE SYNTHASE"/>
    <property type="match status" value="1"/>
</dbReference>
<dbReference type="PANTHER" id="PTHR11587:SF2">
    <property type="entry name" value="ARGININOSUCCINATE SYNTHASE"/>
    <property type="match status" value="1"/>
</dbReference>
<dbReference type="Pfam" id="PF20979">
    <property type="entry name" value="Arginosuc_syn_C"/>
    <property type="match status" value="1"/>
</dbReference>
<dbReference type="Pfam" id="PF00764">
    <property type="entry name" value="Arginosuc_synth"/>
    <property type="match status" value="1"/>
</dbReference>
<dbReference type="SUPFAM" id="SSF52402">
    <property type="entry name" value="Adenine nucleotide alpha hydrolases-like"/>
    <property type="match status" value="1"/>
</dbReference>
<dbReference type="SUPFAM" id="SSF69864">
    <property type="entry name" value="Argininosuccinate synthetase, C-terminal domain"/>
    <property type="match status" value="1"/>
</dbReference>
<dbReference type="PROSITE" id="PS00564">
    <property type="entry name" value="ARGININOSUCCIN_SYN_1"/>
    <property type="match status" value="1"/>
</dbReference>
<dbReference type="PROSITE" id="PS00565">
    <property type="entry name" value="ARGININOSUCCIN_SYN_2"/>
    <property type="match status" value="1"/>
</dbReference>